<sequence>MDADSDWRSAPFRQKLVSQIDEAMRKAGVAHTKSSKDMESHVFLKAKTREEYLSLVARLIIHFRDILNKKSQAAATDPMNALQNLTGTAVVGGQGMGMGVRPQGAQMGAMSGMAQMAQQMNLPGQPQPGASGMAPHGITGVAAGNQATQLQLQQIAQHQQQQFQQQQQQAALQHQQQQFQVAQQQQFQVVAVAAAQQQQQQQQQQQQQQQQVQQQQQQLQAAAQQQHILKLQLQQQQNQQQQLQQQQQQQLQRIAHLQQMQQMQQQQQQQQQQQQQQQQQPPPQQVMQLQQMQQQQVAQSQQQQLLSTQPQAPSLVAQGQIPSQVMPVTLTPQQQQQLKILQQVRAQQQQQAQHQAQQQAQQQAHQQAQQQAQQQAQQQAAQQQAQQAAQQAQQQAQQAAQQQAAQAHLAAGQVTQNSIPVMSSPSPVQQVQTPQPMPPPPQPSPQPSQPMSQPNSNVSSGPAPSPSSFMPSPSPQPSQSPASARTPQNFSVPSPGPLNTPGNPNSVMSPASNNQSEEQQYLDKLKQLSKYIEPLRRMINKIDKNEERKKDLSKMKSLLDILTDPNKRCPLKTLQKCEIALEKLKNDMAVPTPPPPTVPSTKQQYLCQPLLDAVLANIRSPVFNHSLYRTFMPAMTAIHGQPIASQLVVPRKRKFEEDERQSIPNVLQGEVAKLHSKFLVNLDPSHCSNNGTVYLICKLDDKNLPSVPPLQLSVPADYPDQSPLWMDNPRDYEANPFLQSVYRYMTSKLLQLPDKHSLTALLNTWAQSIRQACLSAA</sequence>
<proteinExistence type="evidence at protein level"/>
<reference key="1">
    <citation type="journal article" date="2002" name="Nature">
        <title>A component of the ARC/Mediator complex required for TGF beta/Nodal signalling.</title>
        <authorList>
            <person name="Kato Y."/>
            <person name="Habas R."/>
            <person name="Katsuyama Y."/>
            <person name="Naeaer A.M."/>
            <person name="He X."/>
        </authorList>
    </citation>
    <scope>NUCLEOTIDE SEQUENCE [MRNA] (ISOFORM 2)</scope>
    <scope>FUNCTION</scope>
    <scope>INTERACTION WITH SMAD2; SMAD3 AND SMAD4</scope>
    <scope>DEVELOPMENTAL STAGE</scope>
</reference>
<reference key="2">
    <citation type="submission" date="2004-05" db="EMBL/GenBank/DDBJ databases">
        <authorList>
            <consortium name="NIH - Xenopus Gene Collection (XGC) project"/>
        </authorList>
    </citation>
    <scope>NUCLEOTIDE SEQUENCE [LARGE SCALE MRNA] (ISOFORM 1)</scope>
    <source>
        <tissue>Embryo</tissue>
    </source>
</reference>
<comment type="function">
    <text evidence="1 3">Component of the Mediator complex, a coactivator involved in the regulated transcription of nearly all RNA polymerase II-dependent genes. Mediator functions as a bridge to convey information from gene-specific regulatory proteins to the basal RNA polymerase II transcription machinery. Mediator is recruited to promoters by direct interactions with regulatory proteins and serves as a scaffold for the assembly of a functional preinitiation complex with RNA polymerase II and the general transcription factors. Required for cholesterol-dependent gene regulation (By similarity). Positively regulates the Nodal signaling pathway.</text>
</comment>
<comment type="subunit">
    <text evidence="1 3">Component of the Mediator complex. Interacts with srebf1 and srebf2 (By similarity). Interacts with smad2, smad3 and smad4.</text>
</comment>
<comment type="subcellular location">
    <subcellularLocation>
        <location evidence="1">Cytoplasm</location>
    </subcellularLocation>
    <subcellularLocation>
        <location evidence="1">Nucleus</location>
    </subcellularLocation>
</comment>
<comment type="alternative products">
    <event type="alternative splicing"/>
    <isoform>
        <id>Q6NS15-1</id>
        <name>1</name>
        <sequence type="displayed"/>
    </isoform>
    <isoform>
        <id>Q6NS15-2</id>
        <name>2</name>
        <sequence type="described" ref="VSP_028074"/>
    </isoform>
</comment>
<comment type="developmental stage">
    <text evidence="3">Expressed maternally and throughout embryogenesis.</text>
</comment>
<comment type="similarity">
    <text evidence="5">Belongs to the Mediator complex subunit 15 family.</text>
</comment>
<gene>
    <name type="primary">med15</name>
    <name type="synonym">arc105</name>
</gene>
<name>MED15_XENLA</name>
<organism>
    <name type="scientific">Xenopus laevis</name>
    <name type="common">African clawed frog</name>
    <dbReference type="NCBI Taxonomy" id="8355"/>
    <lineage>
        <taxon>Eukaryota</taxon>
        <taxon>Metazoa</taxon>
        <taxon>Chordata</taxon>
        <taxon>Craniata</taxon>
        <taxon>Vertebrata</taxon>
        <taxon>Euteleostomi</taxon>
        <taxon>Amphibia</taxon>
        <taxon>Batrachia</taxon>
        <taxon>Anura</taxon>
        <taxon>Pipoidea</taxon>
        <taxon>Pipidae</taxon>
        <taxon>Xenopodinae</taxon>
        <taxon>Xenopus</taxon>
        <taxon>Xenopus</taxon>
    </lineage>
</organism>
<dbReference type="EMBL" id="AF378334">
    <property type="protein sequence ID" value="AAM83255.1"/>
    <property type="molecule type" value="mRNA"/>
</dbReference>
<dbReference type="EMBL" id="BC070536">
    <property type="protein sequence ID" value="AAH70536.1"/>
    <property type="molecule type" value="mRNA"/>
</dbReference>
<dbReference type="RefSeq" id="NP_001082292.1">
    <molecule id="Q6NS15-1"/>
    <property type="nucleotide sequence ID" value="NM_001088823.1"/>
</dbReference>
<dbReference type="SMR" id="Q6NS15"/>
<dbReference type="BioGRID" id="99720">
    <property type="interactions" value="3"/>
</dbReference>
<dbReference type="DNASU" id="398388"/>
<dbReference type="GeneID" id="398388"/>
<dbReference type="KEGG" id="xla:398388"/>
<dbReference type="AGR" id="Xenbase:XB-GENE-1010511"/>
<dbReference type="CTD" id="398388"/>
<dbReference type="Xenbase" id="XB-GENE-1010511">
    <property type="gene designation" value="med15.L"/>
</dbReference>
<dbReference type="OrthoDB" id="10055322at2759"/>
<dbReference type="Proteomes" id="UP000186698">
    <property type="component" value="Chromosome 1L"/>
</dbReference>
<dbReference type="Bgee" id="398388">
    <property type="expression patterns" value="Expressed in testis and 19 other cell types or tissues"/>
</dbReference>
<dbReference type="GO" id="GO:0070847">
    <property type="term" value="C:core mediator complex"/>
    <property type="evidence" value="ECO:0000318"/>
    <property type="project" value="GO_Central"/>
</dbReference>
<dbReference type="GO" id="GO:0005737">
    <property type="term" value="C:cytoplasm"/>
    <property type="evidence" value="ECO:0007669"/>
    <property type="project" value="UniProtKB-SubCell"/>
</dbReference>
<dbReference type="GO" id="GO:0005654">
    <property type="term" value="C:nucleoplasm"/>
    <property type="evidence" value="ECO:0007669"/>
    <property type="project" value="UniProtKB-ARBA"/>
</dbReference>
<dbReference type="GO" id="GO:0003712">
    <property type="term" value="F:transcription coregulator activity"/>
    <property type="evidence" value="ECO:0007669"/>
    <property type="project" value="InterPro"/>
</dbReference>
<dbReference type="GO" id="GO:0006355">
    <property type="term" value="P:regulation of DNA-templated transcription"/>
    <property type="evidence" value="ECO:0007669"/>
    <property type="project" value="InterPro"/>
</dbReference>
<dbReference type="FunFam" id="1.10.246.20:FF:000002">
    <property type="entry name" value="Mediator of RNA polymerase II transcription subunit 15"/>
    <property type="match status" value="1"/>
</dbReference>
<dbReference type="Gene3D" id="1.10.246.20">
    <property type="entry name" value="Coactivator CBP, KIX domain"/>
    <property type="match status" value="1"/>
</dbReference>
<dbReference type="InterPro" id="IPR036529">
    <property type="entry name" value="KIX_dom_sf"/>
</dbReference>
<dbReference type="InterPro" id="IPR048386">
    <property type="entry name" value="Med15_C"/>
</dbReference>
<dbReference type="InterPro" id="IPR048385">
    <property type="entry name" value="Med15_central"/>
</dbReference>
<dbReference type="InterPro" id="IPR019087">
    <property type="entry name" value="Med15_N"/>
</dbReference>
<dbReference type="PANTHER" id="PTHR31804">
    <property type="entry name" value="MEDIATOR OF RNA POLYMERASE II TRANSCRIPTION SUBUNIT 15"/>
    <property type="match status" value="1"/>
</dbReference>
<dbReference type="PANTHER" id="PTHR31804:SF3">
    <property type="entry name" value="MEDIATOR OF RNA POLYMERASE II TRANSCRIPTION SUBUNIT 15"/>
    <property type="match status" value="1"/>
</dbReference>
<dbReference type="Pfam" id="PF21539">
    <property type="entry name" value="Med15_C"/>
    <property type="match status" value="1"/>
</dbReference>
<dbReference type="Pfam" id="PF21538">
    <property type="entry name" value="Med15_M"/>
    <property type="match status" value="1"/>
</dbReference>
<dbReference type="Pfam" id="PF09606">
    <property type="entry name" value="Med15_N"/>
    <property type="match status" value="1"/>
</dbReference>
<keyword id="KW-0010">Activator</keyword>
<keyword id="KW-0025">Alternative splicing</keyword>
<keyword id="KW-0963">Cytoplasm</keyword>
<keyword id="KW-0539">Nucleus</keyword>
<keyword id="KW-1185">Reference proteome</keyword>
<keyword id="KW-0804">Transcription</keyword>
<keyword id="KW-0805">Transcription regulation</keyword>
<evidence type="ECO:0000250" key="1"/>
<evidence type="ECO:0000256" key="2">
    <source>
        <dbReference type="SAM" id="MobiDB-lite"/>
    </source>
</evidence>
<evidence type="ECO:0000269" key="3">
    <source>
    </source>
</evidence>
<evidence type="ECO:0000303" key="4">
    <source>
    </source>
</evidence>
<evidence type="ECO:0000305" key="5"/>
<feature type="chain" id="PRO_0000304665" description="Mediator of RNA polymerase II transcription subunit 15">
    <location>
        <begin position="1"/>
        <end position="777"/>
    </location>
</feature>
<feature type="region of interest" description="Disordered" evidence="2">
    <location>
        <begin position="120"/>
        <end position="139"/>
    </location>
</feature>
<feature type="region of interest" description="Disordered" evidence="2">
    <location>
        <begin position="418"/>
        <end position="520"/>
    </location>
</feature>
<feature type="compositionally biased region" description="Low complexity" evidence="2">
    <location>
        <begin position="420"/>
        <end position="434"/>
    </location>
</feature>
<feature type="compositionally biased region" description="Pro residues" evidence="2">
    <location>
        <begin position="435"/>
        <end position="448"/>
    </location>
</feature>
<feature type="compositionally biased region" description="Low complexity" evidence="2">
    <location>
        <begin position="449"/>
        <end position="471"/>
    </location>
</feature>
<feature type="compositionally biased region" description="Polar residues" evidence="2">
    <location>
        <begin position="500"/>
        <end position="519"/>
    </location>
</feature>
<feature type="splice variant" id="VSP_028074" description="In isoform 2." evidence="4">
    <location>
        <begin position="1"/>
        <end position="23"/>
    </location>
</feature>
<feature type="sequence conflict" description="In Ref. 1; AAM83255." evidence="5" ref="1">
    <original>V</original>
    <variation>A</variation>
    <location>
        <position position="190"/>
    </location>
</feature>
<protein>
    <recommendedName>
        <fullName>Mediator of RNA polymerase II transcription subunit 15</fullName>
    </recommendedName>
    <alternativeName>
        <fullName>Activator-recruited cofactor 105 kDa component</fullName>
        <shortName>ARC105</shortName>
        <shortName>xARC105</shortName>
    </alternativeName>
    <alternativeName>
        <fullName>Mediator complex subunit 15</fullName>
    </alternativeName>
</protein>
<accession>Q6NS15</accession>
<accession>Q8JI77</accession>